<accession>A8A2C9</accession>
<protein>
    <recommendedName>
        <fullName evidence="1">o-succinylbenzoate synthase</fullName>
        <shortName evidence="1">OSB synthase</shortName>
        <shortName evidence="1">OSBS</shortName>
        <ecNumber evidence="1">4.2.1.113</ecNumber>
    </recommendedName>
    <alternativeName>
        <fullName evidence="1">4-(2'-carboxyphenyl)-4-oxybutyric acid synthase</fullName>
    </alternativeName>
    <alternativeName>
        <fullName evidence="1">o-succinylbenzoic acid synthase</fullName>
    </alternativeName>
</protein>
<proteinExistence type="inferred from homology"/>
<evidence type="ECO:0000255" key="1">
    <source>
        <dbReference type="HAMAP-Rule" id="MF_00470"/>
    </source>
</evidence>
<organism>
    <name type="scientific">Escherichia coli O9:H4 (strain HS)</name>
    <dbReference type="NCBI Taxonomy" id="331112"/>
    <lineage>
        <taxon>Bacteria</taxon>
        <taxon>Pseudomonadati</taxon>
        <taxon>Pseudomonadota</taxon>
        <taxon>Gammaproteobacteria</taxon>
        <taxon>Enterobacterales</taxon>
        <taxon>Enterobacteriaceae</taxon>
        <taxon>Escherichia</taxon>
    </lineage>
</organism>
<comment type="function">
    <text evidence="1">Converts 2-succinyl-6-hydroxy-2,4-cyclohexadiene-1-carboxylate (SHCHC) to 2-succinylbenzoate (OSB).</text>
</comment>
<comment type="catalytic activity">
    <reaction evidence="1">
        <text>(1R,6R)-6-hydroxy-2-succinyl-cyclohexa-2,4-diene-1-carboxylate = 2-succinylbenzoate + H2O</text>
        <dbReference type="Rhea" id="RHEA:10196"/>
        <dbReference type="ChEBI" id="CHEBI:15377"/>
        <dbReference type="ChEBI" id="CHEBI:18325"/>
        <dbReference type="ChEBI" id="CHEBI:58689"/>
        <dbReference type="EC" id="4.2.1.113"/>
    </reaction>
</comment>
<comment type="cofactor">
    <cofactor evidence="1">
        <name>a divalent metal cation</name>
        <dbReference type="ChEBI" id="CHEBI:60240"/>
    </cofactor>
</comment>
<comment type="pathway">
    <text evidence="1">Quinol/quinone metabolism; 1,4-dihydroxy-2-naphthoate biosynthesis; 1,4-dihydroxy-2-naphthoate from chorismate: step 4/7.</text>
</comment>
<comment type="pathway">
    <text evidence="1">Quinol/quinone metabolism; menaquinone biosynthesis.</text>
</comment>
<comment type="similarity">
    <text evidence="1">Belongs to the mandelate racemase/muconate lactonizing enzyme family. MenC type 1 subfamily.</text>
</comment>
<dbReference type="EC" id="4.2.1.113" evidence="1"/>
<dbReference type="EMBL" id="CP000802">
    <property type="protein sequence ID" value="ABV06683.1"/>
    <property type="molecule type" value="Genomic_DNA"/>
</dbReference>
<dbReference type="RefSeq" id="WP_001255632.1">
    <property type="nucleotide sequence ID" value="NC_009800.1"/>
</dbReference>
<dbReference type="SMR" id="A8A2C9"/>
<dbReference type="KEGG" id="ecx:EcHS_A2407"/>
<dbReference type="HOGENOM" id="CLU_030273_0_1_6"/>
<dbReference type="UniPathway" id="UPA00079"/>
<dbReference type="UniPathway" id="UPA01057">
    <property type="reaction ID" value="UER00165"/>
</dbReference>
<dbReference type="GO" id="GO:0000287">
    <property type="term" value="F:magnesium ion binding"/>
    <property type="evidence" value="ECO:0007669"/>
    <property type="project" value="UniProtKB-UniRule"/>
</dbReference>
<dbReference type="GO" id="GO:0043748">
    <property type="term" value="F:O-succinylbenzoate synthase activity"/>
    <property type="evidence" value="ECO:0007669"/>
    <property type="project" value="UniProtKB-EC"/>
</dbReference>
<dbReference type="GO" id="GO:0009234">
    <property type="term" value="P:menaquinone biosynthetic process"/>
    <property type="evidence" value="ECO:0007669"/>
    <property type="project" value="UniProtKB-UniRule"/>
</dbReference>
<dbReference type="CDD" id="cd03320">
    <property type="entry name" value="OSBS"/>
    <property type="match status" value="1"/>
</dbReference>
<dbReference type="FunFam" id="3.20.20.120:FF:000006">
    <property type="entry name" value="o-succinylbenzoate synthase"/>
    <property type="match status" value="1"/>
</dbReference>
<dbReference type="FunFam" id="3.30.390.10:FF:000005">
    <property type="entry name" value="o-succinylbenzoate synthase"/>
    <property type="match status" value="1"/>
</dbReference>
<dbReference type="Gene3D" id="3.20.20.120">
    <property type="entry name" value="Enolase-like C-terminal domain"/>
    <property type="match status" value="1"/>
</dbReference>
<dbReference type="Gene3D" id="3.30.390.10">
    <property type="entry name" value="Enolase-like, N-terminal domain"/>
    <property type="match status" value="1"/>
</dbReference>
<dbReference type="HAMAP" id="MF_00470">
    <property type="entry name" value="MenC_1"/>
    <property type="match status" value="1"/>
</dbReference>
<dbReference type="InterPro" id="IPR036849">
    <property type="entry name" value="Enolase-like_C_sf"/>
</dbReference>
<dbReference type="InterPro" id="IPR029017">
    <property type="entry name" value="Enolase-like_N"/>
</dbReference>
<dbReference type="InterPro" id="IPR029065">
    <property type="entry name" value="Enolase_C-like"/>
</dbReference>
<dbReference type="InterPro" id="IPR013342">
    <property type="entry name" value="Mandelate_racemase_C"/>
</dbReference>
<dbReference type="InterPro" id="IPR010196">
    <property type="entry name" value="OSB_synthase_MenC1"/>
</dbReference>
<dbReference type="InterPro" id="IPR041338">
    <property type="entry name" value="OSBS_N"/>
</dbReference>
<dbReference type="NCBIfam" id="TIGR01927">
    <property type="entry name" value="menC_gam_Gplu"/>
    <property type="match status" value="1"/>
</dbReference>
<dbReference type="NCBIfam" id="NF003473">
    <property type="entry name" value="PRK05105.1"/>
    <property type="match status" value="1"/>
</dbReference>
<dbReference type="PANTHER" id="PTHR48073:SF2">
    <property type="entry name" value="O-SUCCINYLBENZOATE SYNTHASE"/>
    <property type="match status" value="1"/>
</dbReference>
<dbReference type="PANTHER" id="PTHR48073">
    <property type="entry name" value="O-SUCCINYLBENZOATE SYNTHASE-RELATED"/>
    <property type="match status" value="1"/>
</dbReference>
<dbReference type="Pfam" id="PF21508">
    <property type="entry name" value="MenC_N"/>
    <property type="match status" value="1"/>
</dbReference>
<dbReference type="Pfam" id="PF13378">
    <property type="entry name" value="MR_MLE_C"/>
    <property type="match status" value="1"/>
</dbReference>
<dbReference type="SFLD" id="SFLDS00001">
    <property type="entry name" value="Enolase"/>
    <property type="match status" value="1"/>
</dbReference>
<dbReference type="SFLD" id="SFLDF00009">
    <property type="entry name" value="o-succinylbenzoate_synthase"/>
    <property type="match status" value="1"/>
</dbReference>
<dbReference type="SMART" id="SM00922">
    <property type="entry name" value="MR_MLE"/>
    <property type="match status" value="1"/>
</dbReference>
<dbReference type="SUPFAM" id="SSF51604">
    <property type="entry name" value="Enolase C-terminal domain-like"/>
    <property type="match status" value="1"/>
</dbReference>
<dbReference type="SUPFAM" id="SSF54826">
    <property type="entry name" value="Enolase N-terminal domain-like"/>
    <property type="match status" value="1"/>
</dbReference>
<reference key="1">
    <citation type="journal article" date="2008" name="J. Bacteriol.">
        <title>The pangenome structure of Escherichia coli: comparative genomic analysis of E. coli commensal and pathogenic isolates.</title>
        <authorList>
            <person name="Rasko D.A."/>
            <person name="Rosovitz M.J."/>
            <person name="Myers G.S.A."/>
            <person name="Mongodin E.F."/>
            <person name="Fricke W.F."/>
            <person name="Gajer P."/>
            <person name="Crabtree J."/>
            <person name="Sebaihia M."/>
            <person name="Thomson N.R."/>
            <person name="Chaudhuri R."/>
            <person name="Henderson I.R."/>
            <person name="Sperandio V."/>
            <person name="Ravel J."/>
        </authorList>
    </citation>
    <scope>NUCLEOTIDE SEQUENCE [LARGE SCALE GENOMIC DNA]</scope>
    <source>
        <strain>HS</strain>
    </source>
</reference>
<gene>
    <name evidence="1" type="primary">menC</name>
    <name type="ordered locus">EcHS_A2407</name>
</gene>
<feature type="chain" id="PRO_1000060377" description="o-succinylbenzoate synthase">
    <location>
        <begin position="1"/>
        <end position="320"/>
    </location>
</feature>
<feature type="active site" description="Proton donor" evidence="1">
    <location>
        <position position="133"/>
    </location>
</feature>
<feature type="active site" description="Proton acceptor" evidence="1">
    <location>
        <position position="235"/>
    </location>
</feature>
<feature type="binding site" evidence="1">
    <location>
        <position position="161"/>
    </location>
    <ligand>
        <name>Mg(2+)</name>
        <dbReference type="ChEBI" id="CHEBI:18420"/>
    </ligand>
</feature>
<feature type="binding site" evidence="1">
    <location>
        <position position="190"/>
    </location>
    <ligand>
        <name>Mg(2+)</name>
        <dbReference type="ChEBI" id="CHEBI:18420"/>
    </ligand>
</feature>
<feature type="binding site" evidence="1">
    <location>
        <position position="213"/>
    </location>
    <ligand>
        <name>Mg(2+)</name>
        <dbReference type="ChEBI" id="CHEBI:18420"/>
    </ligand>
</feature>
<sequence length="320" mass="35473">MRSAQVYRWQIPMDAGVVLRDRRLKTRDGLYVCLREGEREGWGEISPLPGFSQETWEEAQSVLLAWVNNWLAGDCELPQMTSVAFGVSCALAELADTLPQAANYRAAPLCNGDPDDLILKLADMPGEKVAKVKVGLYEAVRDGMVVNLLLEAIPDLHLRLDANRAWTPLKGQQFAKYVNPDYRHRIAFLEEPCKTRDDSRAFARETGIAIAWDESLREPDFAFVAEEGVRAVVIKPTLTGSLEKVREQVQAAHALGLTAVISSSIESSLGLTQLARIAAWLTPDTIPGLDTLDLMQAQQVRRWPGSTLPVVEVDALERLL</sequence>
<name>MENC_ECOHS</name>
<keyword id="KW-0456">Lyase</keyword>
<keyword id="KW-0460">Magnesium</keyword>
<keyword id="KW-0474">Menaquinone biosynthesis</keyword>
<keyword id="KW-0479">Metal-binding</keyword>